<evidence type="ECO:0000255" key="1">
    <source>
        <dbReference type="HAMAP-Rule" id="MF_01125"/>
    </source>
</evidence>
<evidence type="ECO:0000255" key="2">
    <source>
        <dbReference type="PROSITE-ProRule" id="PRU01380"/>
    </source>
</evidence>
<evidence type="ECO:0000255" key="3">
    <source>
        <dbReference type="PROSITE-ProRule" id="PRU01381"/>
    </source>
</evidence>
<evidence type="ECO:0000255" key="4">
    <source>
        <dbReference type="PROSITE-ProRule" id="PRU01383"/>
    </source>
</evidence>
<evidence type="ECO:0000269" key="5">
    <source>
    </source>
</evidence>
<evidence type="ECO:0000269" key="6">
    <source>
    </source>
</evidence>
<evidence type="ECO:0000269" key="7">
    <source>
    </source>
</evidence>
<evidence type="ECO:0000269" key="8">
    <source>
    </source>
</evidence>
<evidence type="ECO:0000303" key="9">
    <source>
    </source>
</evidence>
<evidence type="ECO:0000305" key="10"/>
<evidence type="ECO:0000305" key="11">
    <source>
    </source>
</evidence>
<evidence type="ECO:0000312" key="12">
    <source>
        <dbReference type="EMBL" id="QXJ29641.1"/>
    </source>
</evidence>
<name>RGYR_SACSH</name>
<proteinExistence type="evidence at protein level"/>
<gene>
    <name evidence="1" type="primary">rgy</name>
    <name evidence="9" type="synonym">topR</name>
    <name evidence="12" type="ORF">J5U23_02514</name>
</gene>
<organism>
    <name type="scientific">Saccharolobus shibatae (strain ATCC 51178 / DSM 5389 / JCM 8931 / NBRC 15437 / B12)</name>
    <name type="common">Sulfolobus shibatae</name>
    <dbReference type="NCBI Taxonomy" id="523848"/>
    <lineage>
        <taxon>Archaea</taxon>
        <taxon>Thermoproteota</taxon>
        <taxon>Thermoprotei</taxon>
        <taxon>Sulfolobales</taxon>
        <taxon>Sulfolobaceae</taxon>
        <taxon>Saccharolobus</taxon>
    </lineage>
</organism>
<dbReference type="EC" id="5.6.2.-" evidence="1 5 6 7"/>
<dbReference type="EMBL" id="X98420">
    <property type="protein sequence ID" value="CAA67064.1"/>
    <property type="molecule type" value="Genomic_DNA"/>
</dbReference>
<dbReference type="EMBL" id="CP077717">
    <property type="protein sequence ID" value="QXJ29641.1"/>
    <property type="molecule type" value="Genomic_DNA"/>
</dbReference>
<dbReference type="PIR" id="T29099">
    <property type="entry name" value="T29099"/>
</dbReference>
<dbReference type="RefSeq" id="WP_218266312.1">
    <property type="nucleotide sequence ID" value="NZ_CP077717.1"/>
</dbReference>
<dbReference type="SMR" id="P74759"/>
<dbReference type="GeneID" id="65563991"/>
<dbReference type="KEGG" id="sshi:J5U23_02514"/>
<dbReference type="OrthoDB" id="30963at2157"/>
<dbReference type="BRENDA" id="5.6.2.2">
    <property type="organism ID" value="6162"/>
</dbReference>
<dbReference type="Proteomes" id="UP000694018">
    <property type="component" value="Chromosome"/>
</dbReference>
<dbReference type="GO" id="GO:0005737">
    <property type="term" value="C:cytoplasm"/>
    <property type="evidence" value="ECO:0007669"/>
    <property type="project" value="UniProtKB-SubCell"/>
</dbReference>
<dbReference type="GO" id="GO:0005524">
    <property type="term" value="F:ATP binding"/>
    <property type="evidence" value="ECO:0007669"/>
    <property type="project" value="UniProtKB-UniRule"/>
</dbReference>
<dbReference type="GO" id="GO:0016887">
    <property type="term" value="F:ATP hydrolysis activity"/>
    <property type="evidence" value="ECO:0007669"/>
    <property type="project" value="RHEA"/>
</dbReference>
<dbReference type="GO" id="GO:0003677">
    <property type="term" value="F:DNA binding"/>
    <property type="evidence" value="ECO:0007669"/>
    <property type="project" value="UniProtKB-UniRule"/>
</dbReference>
<dbReference type="GO" id="GO:0003918">
    <property type="term" value="F:DNA topoisomerase type II (double strand cut, ATP-hydrolyzing) activity"/>
    <property type="evidence" value="ECO:0007669"/>
    <property type="project" value="UniProtKB-EC"/>
</dbReference>
<dbReference type="GO" id="GO:0160097">
    <property type="term" value="F:reverse gyrase activity"/>
    <property type="evidence" value="ECO:0000314"/>
    <property type="project" value="UniProtKB"/>
</dbReference>
<dbReference type="GO" id="GO:0008270">
    <property type="term" value="F:zinc ion binding"/>
    <property type="evidence" value="ECO:0007669"/>
    <property type="project" value="UniProtKB-UniRule"/>
</dbReference>
<dbReference type="GO" id="GO:0006265">
    <property type="term" value="P:DNA topological change"/>
    <property type="evidence" value="ECO:0000314"/>
    <property type="project" value="UniProtKB"/>
</dbReference>
<dbReference type="CDD" id="cd18798">
    <property type="entry name" value="SF2_C_reverse_gyrase"/>
    <property type="match status" value="1"/>
</dbReference>
<dbReference type="CDD" id="cd00186">
    <property type="entry name" value="TOP1Ac"/>
    <property type="match status" value="1"/>
</dbReference>
<dbReference type="CDD" id="cd03361">
    <property type="entry name" value="TOPRIM_TopoIA_RevGyr"/>
    <property type="match status" value="1"/>
</dbReference>
<dbReference type="Gene3D" id="2.60.510.20">
    <property type="match status" value="1"/>
</dbReference>
<dbReference type="Gene3D" id="3.40.50.140">
    <property type="match status" value="1"/>
</dbReference>
<dbReference type="Gene3D" id="3.40.50.300">
    <property type="entry name" value="P-loop containing nucleotide triphosphate hydrolases"/>
    <property type="match status" value="3"/>
</dbReference>
<dbReference type="Gene3D" id="1.10.460.10">
    <property type="entry name" value="Topoisomerase I, domain 2"/>
    <property type="match status" value="1"/>
</dbReference>
<dbReference type="Gene3D" id="1.10.290.10">
    <property type="entry name" value="Topoisomerase I, domain 4"/>
    <property type="match status" value="1"/>
</dbReference>
<dbReference type="HAMAP" id="MF_01125">
    <property type="entry name" value="Reverse_gyrase"/>
    <property type="match status" value="1"/>
</dbReference>
<dbReference type="InterPro" id="IPR011545">
    <property type="entry name" value="DEAD/DEAH_box_helicase_dom"/>
</dbReference>
<dbReference type="InterPro" id="IPR014001">
    <property type="entry name" value="Helicase_ATP-bd"/>
</dbReference>
<dbReference type="InterPro" id="IPR027417">
    <property type="entry name" value="P-loop_NTPase"/>
</dbReference>
<dbReference type="InterPro" id="IPR005736">
    <property type="entry name" value="Reverse_gyrase"/>
</dbReference>
<dbReference type="InterPro" id="IPR003601">
    <property type="entry name" value="Topo_IA_2"/>
</dbReference>
<dbReference type="InterPro" id="IPR013497">
    <property type="entry name" value="Topo_IA_cen"/>
</dbReference>
<dbReference type="InterPro" id="IPR013824">
    <property type="entry name" value="Topo_IA_cen_sub1"/>
</dbReference>
<dbReference type="InterPro" id="IPR013826">
    <property type="entry name" value="Topo_IA_cen_sub3"/>
</dbReference>
<dbReference type="InterPro" id="IPR023405">
    <property type="entry name" value="Topo_IA_core_domain"/>
</dbReference>
<dbReference type="InterPro" id="IPR003602">
    <property type="entry name" value="Topo_IA_DNA-bd_dom"/>
</dbReference>
<dbReference type="InterPro" id="IPR006171">
    <property type="entry name" value="TOPRIM_dom"/>
</dbReference>
<dbReference type="InterPro" id="IPR034142">
    <property type="entry name" value="TOPRIM_RevGyr"/>
</dbReference>
<dbReference type="InterPro" id="IPR040569">
    <property type="entry name" value="Znf_Rg"/>
</dbReference>
<dbReference type="NCBIfam" id="TIGR01054">
    <property type="entry name" value="rgy"/>
    <property type="match status" value="1"/>
</dbReference>
<dbReference type="PANTHER" id="PTHR43505">
    <property type="entry name" value="REVERSE GYRASE"/>
    <property type="match status" value="1"/>
</dbReference>
<dbReference type="PANTHER" id="PTHR43505:SF1">
    <property type="entry name" value="REVERSE GYRASE"/>
    <property type="match status" value="1"/>
</dbReference>
<dbReference type="Pfam" id="PF00270">
    <property type="entry name" value="DEAD"/>
    <property type="match status" value="1"/>
</dbReference>
<dbReference type="Pfam" id="PF01131">
    <property type="entry name" value="Topoisom_bac"/>
    <property type="match status" value="1"/>
</dbReference>
<dbReference type="Pfam" id="PF01751">
    <property type="entry name" value="Toprim"/>
    <property type="match status" value="1"/>
</dbReference>
<dbReference type="Pfam" id="PF17915">
    <property type="entry name" value="zf_Rg"/>
    <property type="match status" value="1"/>
</dbReference>
<dbReference type="PRINTS" id="PR00417">
    <property type="entry name" value="PRTPISMRASEI"/>
</dbReference>
<dbReference type="SMART" id="SM00487">
    <property type="entry name" value="DEXDc"/>
    <property type="match status" value="1"/>
</dbReference>
<dbReference type="SMART" id="SM00437">
    <property type="entry name" value="TOP1Ac"/>
    <property type="match status" value="1"/>
</dbReference>
<dbReference type="SMART" id="SM00436">
    <property type="entry name" value="TOP1Bc"/>
    <property type="match status" value="1"/>
</dbReference>
<dbReference type="SMART" id="SM00493">
    <property type="entry name" value="TOPRIM"/>
    <property type="match status" value="1"/>
</dbReference>
<dbReference type="SUPFAM" id="SSF52540">
    <property type="entry name" value="P-loop containing nucleoside triphosphate hydrolases"/>
    <property type="match status" value="2"/>
</dbReference>
<dbReference type="SUPFAM" id="SSF56712">
    <property type="entry name" value="Prokaryotic type I DNA topoisomerase"/>
    <property type="match status" value="1"/>
</dbReference>
<dbReference type="PROSITE" id="PS51192">
    <property type="entry name" value="HELICASE_ATP_BIND_1"/>
    <property type="match status" value="1"/>
</dbReference>
<dbReference type="PROSITE" id="PS52039">
    <property type="entry name" value="TOPO_IA_2"/>
    <property type="match status" value="1"/>
</dbReference>
<dbReference type="PROSITE" id="PS50880">
    <property type="entry name" value="TOPRIM"/>
    <property type="match status" value="1"/>
</dbReference>
<dbReference type="PROSITE" id="PS52037">
    <property type="entry name" value="ZF_RG_C"/>
    <property type="match status" value="1"/>
</dbReference>
<dbReference type="PROSITE" id="PS52036">
    <property type="entry name" value="ZF_RG_N"/>
    <property type="match status" value="1"/>
</dbReference>
<comment type="function">
    <text evidence="5 6 7 11">Modifies the topological state of DNA by introducing positive supercoils in an ATP-dependent process (PubMed:15190074, PubMed:15673717, PubMed:8106509). Increases the linking number in steps of +1 (PubMed:8106509). In vitro requires high concentrations to supercoil negatively supercoiled DNA, relaxes plasmid DNA first; DNA single-strand binding protein (SSB) from S.solfataricus strain P2 stimulates positive supercoiling (PubMed:15673717). SSB stimulates DNA-binding by reverse gyrase, and thus all subsequent steps (PubMed:15673717). Binds to single-stranded DNA, transiently cleaves and then rejoins the ends, introducing a positive supercoil in the process. The scissile phosphodiester is attacked by the catalytic tyrosine of the enzyme, resulting in the formation of a DNA-(5'-phosphotyrosyl)-enzyme intermediate (Probable) (PubMed:15190074). May be involved in DNA damage response (Probable) (PubMed:15190074). Probably involved in rewinding DNA strands in regions of the chromosome that have opened up to allow replication, transcription, DNA repair and/or for DNA protection.</text>
</comment>
<comment type="catalytic activity">
    <reaction evidence="1">
        <text>ATP + H2O = ADP + phosphate + H(+)</text>
        <dbReference type="Rhea" id="RHEA:13065"/>
        <dbReference type="ChEBI" id="CHEBI:15377"/>
        <dbReference type="ChEBI" id="CHEBI:15378"/>
        <dbReference type="ChEBI" id="CHEBI:30616"/>
        <dbReference type="ChEBI" id="CHEBI:43474"/>
        <dbReference type="ChEBI" id="CHEBI:456216"/>
    </reaction>
</comment>
<comment type="cofactor">
    <cofactor evidence="1">
        <name>Zn(2+)</name>
        <dbReference type="ChEBI" id="CHEBI:29105"/>
    </cofactor>
    <text evidence="1">Binds 2 zinc ions per subunit.</text>
</comment>
<comment type="cofactor">
    <cofactor evidence="1 7">
        <name>Mg(2+)</name>
        <dbReference type="ChEBI" id="CHEBI:18420"/>
    </cofactor>
</comment>
<comment type="activity regulation">
    <text evidence="5 6">Inhibited by UV light-induced lesions; substrate is completely cleaved but a nicked form accumulates, suggesting the reaction is blocked between the cleavage and ligation steps (PubMed:15190074). Inhibited by actinomycin D; substrate DNA remains negatively supercoiled in this case (PubMed:15190074). Activity is stimulated by SSB from S.solfataricus strain P2. Positive supercoiling is inhibited by Sul7d (also called Sso7d) from S.solfataricus strain MT4; SSB from S.solfataricus strain P2 relieves this inhibition (PubMed:15673717).</text>
</comment>
<comment type="subunit">
    <text evidence="1 7">Monomer (PubMed:8106509).</text>
</comment>
<comment type="subcellular location">
    <subcellularLocation>
        <location evidence="1">Cytoplasm</location>
    </subcellularLocation>
</comment>
<comment type="induction">
    <text evidence="8">Transcribed at least during mid-log phase, seems to be a monocistronic operon (PubMed:8972852).</text>
</comment>
<comment type="domain">
    <text evidence="1">Introduction of positive supercoils requires the cooperation of both domains. The helicase-like domain probably does not directly unwind DNA, but more likely acts by driving ATP-dependent conformational changes within the whole enzyme. A beta hairpin in the 'latch' region of the N-terminal domain plays a regulatory role in the enzyme, repressing topoisomerase activity in the absence of ATP and preventing the enzyme from acting as an ATP-independent relaxing enzyme; it also helps to coordinate nucleotide hydrolysis by the ATPase domain with the supercoiling activity of the topoisomerase domain.</text>
</comment>
<comment type="miscellaneous">
    <text evidence="1">This enzyme is the only unique feature of hyperthermophilic bacteria/archaea known and seems to be essential for adaptation to life at high temperatures. It may play a role in stabilization of DNA at high temperatures.</text>
</comment>
<comment type="similarity">
    <text evidence="1">In the N-terminal section; belongs to the DEAD box helicase family. DDVD subfamily.</text>
</comment>
<comment type="similarity">
    <text evidence="1">In the C-terminal section; belongs to the type IA topoisomerase family.</text>
</comment>
<comment type="caution">
    <text evidence="10">Ala-192 is present instead of the conserved Val which is part of the DDVD box.</text>
</comment>
<accession>P74759</accession>
<accession>A0A8F5GUA5</accession>
<protein>
    <recommendedName>
        <fullName evidence="1">Reverse gyrase</fullName>
        <ecNumber evidence="1 5 6 7">5.6.2.-</ecNumber>
    </recommendedName>
</protein>
<feature type="chain" id="PRO_0000158091" description="Reverse gyrase">
    <location>
        <begin position="1"/>
        <end position="1166"/>
    </location>
</feature>
<feature type="domain" description="Helicase ATP-binding" evidence="1">
    <location>
        <begin position="96"/>
        <end position="285"/>
    </location>
</feature>
<feature type="domain" description="Toprim" evidence="1">
    <location>
        <begin position="580"/>
        <end position="743"/>
    </location>
</feature>
<feature type="domain" description="Topo IA-type catalytic" evidence="4">
    <location>
        <begin position="759"/>
        <end position="1157"/>
    </location>
</feature>
<feature type="zinc finger region" description="RG N-terminal-type" evidence="2">
    <location>
        <begin position="1"/>
        <end position="40"/>
    </location>
</feature>
<feature type="zinc finger region" description="RG C-terminal-type" evidence="3">
    <location>
        <begin position="662"/>
        <end position="689"/>
    </location>
</feature>
<feature type="region of interest" description="Topoisomerase I" evidence="1">
    <location>
        <begin position="576"/>
        <end position="1166"/>
    </location>
</feature>
<feature type="short sequence motif" description="DEAD box" evidence="1">
    <location>
        <begin position="190"/>
        <end position="193"/>
    </location>
</feature>
<feature type="active site" description="O-(5'-phospho-DNA)-tyrosine intermediate" evidence="4">
    <location>
        <position position="903"/>
    </location>
</feature>
<feature type="binding site" evidence="1">
    <location>
        <position position="10"/>
    </location>
    <ligand>
        <name>Zn(2+)</name>
        <dbReference type="ChEBI" id="CHEBI:29105"/>
        <label>1</label>
    </ligand>
</feature>
<feature type="binding site" evidence="1">
    <location>
        <position position="13"/>
    </location>
    <ligand>
        <name>Zn(2+)</name>
        <dbReference type="ChEBI" id="CHEBI:29105"/>
        <label>1</label>
    </ligand>
</feature>
<feature type="binding site" evidence="1">
    <location>
        <position position="28"/>
    </location>
    <ligand>
        <name>Zn(2+)</name>
        <dbReference type="ChEBI" id="CHEBI:29105"/>
        <label>1</label>
    </ligand>
</feature>
<feature type="binding site" evidence="1">
    <location>
        <position position="31"/>
    </location>
    <ligand>
        <name>Zn(2+)</name>
        <dbReference type="ChEBI" id="CHEBI:29105"/>
        <label>1</label>
    </ligand>
</feature>
<feature type="binding site" evidence="1">
    <location>
        <position position="92"/>
    </location>
    <ligand>
        <name>ATP</name>
        <dbReference type="ChEBI" id="CHEBI:30616"/>
    </ligand>
</feature>
<feature type="binding site" evidence="1">
    <location>
        <begin position="109"/>
        <end position="116"/>
    </location>
    <ligand>
        <name>ATP</name>
        <dbReference type="ChEBI" id="CHEBI:30616"/>
    </ligand>
</feature>
<feature type="binding site" evidence="1">
    <location>
        <position position="586"/>
    </location>
    <ligand>
        <name>Mg(2+)</name>
        <dbReference type="ChEBI" id="CHEBI:18420"/>
        <note>catalytic</note>
    </ligand>
</feature>
<feature type="binding site" evidence="1">
    <location>
        <position position="665"/>
    </location>
    <ligand>
        <name>Zn(2+)</name>
        <dbReference type="ChEBI" id="CHEBI:29105"/>
        <label>2</label>
    </ligand>
</feature>
<feature type="binding site" evidence="1">
    <location>
        <position position="668"/>
    </location>
    <ligand>
        <name>Zn(2+)</name>
        <dbReference type="ChEBI" id="CHEBI:29105"/>
        <label>2</label>
    </ligand>
</feature>
<feature type="binding site" evidence="1">
    <location>
        <position position="679"/>
    </location>
    <ligand>
        <name>Zn(2+)</name>
        <dbReference type="ChEBI" id="CHEBI:29105"/>
        <label>2</label>
    </ligand>
</feature>
<feature type="binding site" evidence="1">
    <location>
        <position position="682"/>
    </location>
    <ligand>
        <name>Zn(2+)</name>
        <dbReference type="ChEBI" id="CHEBI:29105"/>
        <label>2</label>
    </ligand>
</feature>
<feature type="binding site" evidence="1">
    <location>
        <position position="712"/>
    </location>
    <ligand>
        <name>Mg(2+)</name>
        <dbReference type="ChEBI" id="CHEBI:18420"/>
        <note>catalytic</note>
    </ligand>
</feature>
<sequence length="1166" mass="132080">MINVMYKNSCPNCGGDISADRLLNGLPCETCLPYINGIDGIDHISKVKALYNILLDNDKIKNYWNLYYNITTFETVFKYFKDKTGYEPWSLQKLWLRRLVSNQSFTMSAPTGLGKTTTLMTYSVFIGQDVVYIVPTKSLMEQVCKRLEKLGAQVSCGKVDQRKVSVITISYLNKNADSITSYKPNFVAIDDADAVIKSGKTTDRLVSLLGIPNDVYESAIQLIRLRNKYYFSNEFTEEIKEKIRELELKIAEFKDKISQLVIASATIRPKGIKQKALRLLTGFEPSSIQLYARNIIDTYTDNLDLSIIKELGSGGLILVSKEYGRSRLNEIKKYVEDLGFNAKLAISGRKFLDDFSQGKVDILVGSASYYGVAVRGIDEPKRLKYVIYYGVPKIKAKLFDALSNPFTLLRVGKMIGVNFSELQNKILVLSPSEAQLLKFSIIKGETINYQKLEQLRQELLYYISLVKDKLKEIGEETLISDNFVIAKQNTNYYIIYPDMITYLQGSGRASRLYNGGLTLGFSIILVDDKHIFEILKKKMQKLFPNTNFTSLSNINLSEIKTKLEESRKEEGNRVHFNISTGLLIVESPTKAKTIAKMFSRPSVRVINKVPVYETIIVDGNQIYVLDVVASKGHIVDLTLEDIGYYGIKIEYSGIIKPYYDLIKKCLDCNKTFSIASDKCPYCGSTNVQTAQTTINLLRELALSVDKVFIASDPDTEGEKIAYDLASFLSPYNSNIYRITYHEITKKAILEALRNPMKINTNLVMSQIVRRIEDRWIGFTLSNLLKTKFNGHNHGAGRVQTPVLGWIVDKTIKYKSAMGYVVYIDIAGYPIKMHFSERKKMEEYINNLQVVKIEKIFEEKILLSPLPPFTTDTLLIEANMKYKLPANLVMKIAQDLFEAGLITYHRTDSTHISSVGIEIAKEYLQKQGLIKDFVPRSWESSEEGAHEAIRPTRAIDVNELIQEIEENPYKYSIRFSKLHFLIYDLIFRRFMASQMSHAVGTKSRYLIKLNKNDNINAELLSNAEGGFIKVYPVKVYNLPLGEVKPKVNTGKGSSEQLLSYSDVISLMKSKGIGRPSTYAKTIENLVRHGYIVSSKRKSYLIATNRGISAYQFLSSKFYDLVSEGTTAKLMSKLDDIALSKLSASTVLLEIFSEISTLVNPLKSEQNV</sequence>
<keyword id="KW-0067">ATP-binding</keyword>
<keyword id="KW-0963">Cytoplasm</keyword>
<keyword id="KW-0238">DNA-binding</keyword>
<keyword id="KW-0413">Isomerase</keyword>
<keyword id="KW-0460">Magnesium</keyword>
<keyword id="KW-0479">Metal-binding</keyword>
<keyword id="KW-0547">Nucleotide-binding</keyword>
<keyword id="KW-0677">Repeat</keyword>
<keyword id="KW-0799">Topoisomerase</keyword>
<keyword id="KW-0862">Zinc</keyword>
<keyword id="KW-0863">Zinc-finger</keyword>
<reference key="1">
    <citation type="journal article" date="1996" name="Nucleic Acids Res.">
        <title>Reverse gyrase gene from Sulfolobus shibatae B12: gene structure, transcription unit and comparative sequence analysis of the two domains.</title>
        <authorList>
            <person name="Jaxel C."/>
            <person name="Bouthier de la Tour C."/>
            <person name="Duguet M."/>
            <person name="Nadal M."/>
        </authorList>
    </citation>
    <scope>NUCLEOTIDE SEQUENCE [GENOMIC DNA]</scope>
    <scope>INDUCTION</scope>
    <source>
        <strain>ATCC 51178 / DSM 5389 / JCM 8931 / NBRC 15437 / B12</strain>
    </source>
</reference>
<reference evidence="12" key="2">
    <citation type="journal article" date="2021" name="Environ. Microbiol.">
        <title>New insights into the diversity and evolution of the archaeal mobilome from three complete genomes of Saccharolobus shibatae.</title>
        <authorList>
            <person name="Medvedeva S."/>
            <person name="Brandt D."/>
            <person name="Cvirkaite-Krupovic V."/>
            <person name="Liu Y."/>
            <person name="Severinov K."/>
            <person name="Ishino S."/>
            <person name="Ishino Y."/>
            <person name="Prangishvili D."/>
            <person name="Kalinowski J."/>
            <person name="Krupovic M."/>
        </authorList>
    </citation>
    <scope>NUCLEOTIDE SEQUENCE [LARGE SCALE GENOMIC DNA]</scope>
    <source>
        <strain>ATCC 51178 / DSM 5389 / JCM 8931 / NBRC 15437 / B12</strain>
    </source>
</reference>
<reference key="3">
    <citation type="journal article" date="1994" name="J. Biol. Chem.">
        <title>Purification and characterization of reverse gyrase from Sulfolobus shibatae. Its proteolytic product appears as an ATP-independent topoisomerase.</title>
        <authorList>
            <person name="Nadal M."/>
            <person name="Couderc E."/>
            <person name="Duguet M."/>
            <person name="Jaxel C."/>
        </authorList>
    </citation>
    <scope>FUNCTION</scope>
    <scope>CATALYTIC ACTIVITY</scope>
    <scope>COFACTOR</scope>
    <scope>SUBUNIT</scope>
    <source>
        <strain>ATCC 51178 / DSM 5389 / JCM 8931 / NBRC 15437 / B12</strain>
    </source>
</reference>
<reference key="4">
    <citation type="journal article" date="2004" name="J. Biol. Chem.">
        <title>Reverse gyrase recruitment to DNA after UV light irradiation in Sulfolobus solfataricus.</title>
        <authorList>
            <person name="Napoli A."/>
            <person name="Valenti A."/>
            <person name="Salerno V."/>
            <person name="Nadal M."/>
            <person name="Garnier F."/>
            <person name="Rossi M."/>
            <person name="Ciaramella M."/>
        </authorList>
    </citation>
    <scope>FUNCTION</scope>
    <scope>CATALYTIC ACTIVITY</scope>
    <scope>REACTION MECHANISM</scope>
    <scope>ACTIVITY REGULATION</scope>
    <source>
        <strain>ATCC 51178 / DSM 5389 / JCM 8931 / NBRC 15437 / B12</strain>
    </source>
</reference>
<reference key="5">
    <citation type="journal article" date="2005" name="Nucleic Acids Res.">
        <title>Functional interaction of reverse gyrase with single-strand binding protein of the archaeon Sulfolobus.</title>
        <authorList>
            <person name="Napoli A."/>
            <person name="Valenti A."/>
            <person name="Salerno V."/>
            <person name="Nadal M."/>
            <person name="Garnier F."/>
            <person name="Rossi M."/>
            <person name="Ciaramella M."/>
        </authorList>
    </citation>
    <scope>FUNCTION</scope>
    <scope>CATALYTIC ACTIVITY</scope>
    <scope>ACTIVITY REGULATION</scope>
    <scope>DNA-BINDING</scope>
    <source>
        <strain>ATCC 51178 / DSM 5389 / JCM 8931 / NBRC 15437 / B12</strain>
    </source>
</reference>